<dbReference type="EMBL" id="CR380955">
    <property type="protein sequence ID" value="CAG60605.1"/>
    <property type="molecule type" value="Genomic_DNA"/>
</dbReference>
<dbReference type="RefSeq" id="XP_447668.1">
    <property type="nucleotide sequence ID" value="XM_447668.1"/>
</dbReference>
<dbReference type="FunCoup" id="Q6FQ26">
    <property type="interactions" value="58"/>
</dbReference>
<dbReference type="EnsemblFungi" id="CAGL0I09680g-T">
    <property type="protein sequence ID" value="CAGL0I09680g-T-p1"/>
    <property type="gene ID" value="CAGL0I09680g"/>
</dbReference>
<dbReference type="KEGG" id="cgr:2888941"/>
<dbReference type="CGD" id="CAL0130406">
    <property type="gene designation" value="CAGL0I09680g"/>
</dbReference>
<dbReference type="VEuPathDB" id="FungiDB:CAGL0I09680g"/>
<dbReference type="eggNOG" id="ENOG502RZ1Q">
    <property type="taxonomic scope" value="Eukaryota"/>
</dbReference>
<dbReference type="HOGENOM" id="CLU_085105_1_0_1"/>
<dbReference type="InParanoid" id="Q6FQ26"/>
<dbReference type="OMA" id="YYENEYA"/>
<dbReference type="Proteomes" id="UP000002428">
    <property type="component" value="Chromosome I"/>
</dbReference>
<dbReference type="GO" id="GO:0005739">
    <property type="term" value="C:mitochondrion"/>
    <property type="evidence" value="ECO:0007669"/>
    <property type="project" value="UniProtKB-SubCell"/>
</dbReference>
<dbReference type="InterPro" id="IPR018828">
    <property type="entry name" value="RRG7"/>
</dbReference>
<dbReference type="PANTHER" id="PTHR28133">
    <property type="entry name" value="REQUIRED FOR RESPIRATORY GROWTH PROTEIN 7, MITOCHONDRIAL"/>
    <property type="match status" value="1"/>
</dbReference>
<dbReference type="PANTHER" id="PTHR28133:SF1">
    <property type="entry name" value="REQUIRED FOR RESPIRATORY GROWTH PROTEIN 7, MITOCHONDRIAL"/>
    <property type="match status" value="1"/>
</dbReference>
<dbReference type="Pfam" id="PF10356">
    <property type="entry name" value="RRG7"/>
    <property type="match status" value="1"/>
</dbReference>
<feature type="chain" id="PRO_0000405455" description="Required for respiratory growth protein 7, mitochondrial">
    <location>
        <begin position="1"/>
        <end position="253"/>
    </location>
</feature>
<organism>
    <name type="scientific">Candida glabrata (strain ATCC 2001 / BCRC 20586 / JCM 3761 / NBRC 0622 / NRRL Y-65 / CBS 138)</name>
    <name type="common">Yeast</name>
    <name type="synonym">Nakaseomyces glabratus</name>
    <dbReference type="NCBI Taxonomy" id="284593"/>
    <lineage>
        <taxon>Eukaryota</taxon>
        <taxon>Fungi</taxon>
        <taxon>Dikarya</taxon>
        <taxon>Ascomycota</taxon>
        <taxon>Saccharomycotina</taxon>
        <taxon>Saccharomycetes</taxon>
        <taxon>Saccharomycetales</taxon>
        <taxon>Saccharomycetaceae</taxon>
        <taxon>Nakaseomyces</taxon>
    </lineage>
</organism>
<gene>
    <name type="primary">RRG7</name>
    <name type="ordered locus">CAGL0I09680g</name>
</gene>
<comment type="subcellular location">
    <subcellularLocation>
        <location evidence="1">Mitochondrion</location>
    </subcellularLocation>
</comment>
<comment type="similarity">
    <text evidence="2">Belongs to the RRG7 family.</text>
</comment>
<sequence>MIRHSCRALRFVRSFHDYNSDILKFVASNTLISDSAVYKGKLYELTVQRELYNKLRIGQLDVVGGAHDGGVDIKALWNLFPIFQCALDAGVIKEPSLPLKGTRINDTLVKPLVNQYDIKNKIAPSIEVLVQCKAYVSKISPKEIRELAGTYLSLTAKNKASLSTIPIMCSPQLPTSSSLKLLEKLNIPFLYLRINTLRHGSLNDFELTNTGQLMGYLMNPILKGYLEGSGFEEWMKFELYNNAMNHSQDKDFI</sequence>
<accession>Q6FQ26</accession>
<protein>
    <recommendedName>
        <fullName>Required for respiratory growth protein 7, mitochondrial</fullName>
    </recommendedName>
</protein>
<keyword id="KW-0496">Mitochondrion</keyword>
<keyword id="KW-1185">Reference proteome</keyword>
<reference key="1">
    <citation type="journal article" date="2004" name="Nature">
        <title>Genome evolution in yeasts.</title>
        <authorList>
            <person name="Dujon B."/>
            <person name="Sherman D."/>
            <person name="Fischer G."/>
            <person name="Durrens P."/>
            <person name="Casaregola S."/>
            <person name="Lafontaine I."/>
            <person name="de Montigny J."/>
            <person name="Marck C."/>
            <person name="Neuveglise C."/>
            <person name="Talla E."/>
            <person name="Goffard N."/>
            <person name="Frangeul L."/>
            <person name="Aigle M."/>
            <person name="Anthouard V."/>
            <person name="Babour A."/>
            <person name="Barbe V."/>
            <person name="Barnay S."/>
            <person name="Blanchin S."/>
            <person name="Beckerich J.-M."/>
            <person name="Beyne E."/>
            <person name="Bleykasten C."/>
            <person name="Boisrame A."/>
            <person name="Boyer J."/>
            <person name="Cattolico L."/>
            <person name="Confanioleri F."/>
            <person name="de Daruvar A."/>
            <person name="Despons L."/>
            <person name="Fabre E."/>
            <person name="Fairhead C."/>
            <person name="Ferry-Dumazet H."/>
            <person name="Groppi A."/>
            <person name="Hantraye F."/>
            <person name="Hennequin C."/>
            <person name="Jauniaux N."/>
            <person name="Joyet P."/>
            <person name="Kachouri R."/>
            <person name="Kerrest A."/>
            <person name="Koszul R."/>
            <person name="Lemaire M."/>
            <person name="Lesur I."/>
            <person name="Ma L."/>
            <person name="Muller H."/>
            <person name="Nicaud J.-M."/>
            <person name="Nikolski M."/>
            <person name="Oztas S."/>
            <person name="Ozier-Kalogeropoulos O."/>
            <person name="Pellenz S."/>
            <person name="Potier S."/>
            <person name="Richard G.-F."/>
            <person name="Straub M.-L."/>
            <person name="Suleau A."/>
            <person name="Swennen D."/>
            <person name="Tekaia F."/>
            <person name="Wesolowski-Louvel M."/>
            <person name="Westhof E."/>
            <person name="Wirth B."/>
            <person name="Zeniou-Meyer M."/>
            <person name="Zivanovic Y."/>
            <person name="Bolotin-Fukuhara M."/>
            <person name="Thierry A."/>
            <person name="Bouchier C."/>
            <person name="Caudron B."/>
            <person name="Scarpelli C."/>
            <person name="Gaillardin C."/>
            <person name="Weissenbach J."/>
            <person name="Wincker P."/>
            <person name="Souciet J.-L."/>
        </authorList>
    </citation>
    <scope>NUCLEOTIDE SEQUENCE [LARGE SCALE GENOMIC DNA]</scope>
    <source>
        <strain>ATCC 2001 / BCRC 20586 / JCM 3761 / NBRC 0622 / NRRL Y-65 / CBS 138</strain>
    </source>
</reference>
<proteinExistence type="inferred from homology"/>
<evidence type="ECO:0000250" key="1"/>
<evidence type="ECO:0000305" key="2"/>
<name>RRG7_CANGA</name>